<sequence>MKYDTSELCDIYQEDVNVVEPLFSNFGGRASFGGQIITVKCFEDNGLLYDLLEQNGRGRVLVVDGGGSVRRALVDAELARLAVQNEWEGLVIYGAVRQVDDLEELDIGIQAMAAIPVGAAGESIGESDVRVNFGGVTFFSGDHLYADNTGIILSEDPLDIE</sequence>
<protein>
    <recommendedName>
        <fullName evidence="1">Regulator of ribonuclease activity A</fullName>
    </recommendedName>
</protein>
<keyword id="KW-0963">Cytoplasm</keyword>
<comment type="function">
    <text evidence="1">Globally modulates RNA abundance by binding to RNase E (Rne) and regulating its endonucleolytic activity. Can modulate Rne action in a substrate-dependent manner by altering the composition of the degradosome. Modulates RNA-binding and helicase activities of the degradosome.</text>
</comment>
<comment type="subunit">
    <text evidence="1">Homotrimer. Binds to both RNA-binding sites in the C-terminal region of Rne and to RhlB.</text>
</comment>
<comment type="subcellular location">
    <subcellularLocation>
        <location evidence="1">Cytoplasm</location>
    </subcellularLocation>
</comment>
<comment type="similarity">
    <text evidence="1">Belongs to the RraA family.</text>
</comment>
<gene>
    <name evidence="1" type="primary">rraA</name>
    <name type="ordered locus">SFV_4000</name>
</gene>
<dbReference type="EMBL" id="CP000266">
    <property type="protein sequence ID" value="ABF06005.1"/>
    <property type="molecule type" value="Genomic_DNA"/>
</dbReference>
<dbReference type="RefSeq" id="WP_000872911.1">
    <property type="nucleotide sequence ID" value="NC_008258.1"/>
</dbReference>
<dbReference type="SMR" id="Q0SY60"/>
<dbReference type="KEGG" id="sfv:SFV_4000"/>
<dbReference type="HOGENOM" id="CLU_072626_4_0_6"/>
<dbReference type="Proteomes" id="UP000000659">
    <property type="component" value="Chromosome"/>
</dbReference>
<dbReference type="GO" id="GO:0005829">
    <property type="term" value="C:cytosol"/>
    <property type="evidence" value="ECO:0007669"/>
    <property type="project" value="TreeGrafter"/>
</dbReference>
<dbReference type="GO" id="GO:0060698">
    <property type="term" value="F:endoribonuclease inhibitor activity"/>
    <property type="evidence" value="ECO:0007669"/>
    <property type="project" value="UniProtKB-UniRule"/>
</dbReference>
<dbReference type="GO" id="GO:0019899">
    <property type="term" value="F:enzyme binding"/>
    <property type="evidence" value="ECO:0007669"/>
    <property type="project" value="UniProtKB-UniRule"/>
</dbReference>
<dbReference type="GO" id="GO:1902369">
    <property type="term" value="P:negative regulation of RNA catabolic process"/>
    <property type="evidence" value="ECO:0007669"/>
    <property type="project" value="TreeGrafter"/>
</dbReference>
<dbReference type="CDD" id="cd16841">
    <property type="entry name" value="RraA_family"/>
    <property type="match status" value="1"/>
</dbReference>
<dbReference type="FunFam" id="3.50.30.40:FF:000001">
    <property type="entry name" value="Regulator of ribonuclease activity A"/>
    <property type="match status" value="1"/>
</dbReference>
<dbReference type="Gene3D" id="3.50.30.40">
    <property type="entry name" value="Ribonuclease E inhibitor RraA/RraA-like"/>
    <property type="match status" value="1"/>
</dbReference>
<dbReference type="HAMAP" id="MF_00471">
    <property type="entry name" value="RraA"/>
    <property type="match status" value="1"/>
</dbReference>
<dbReference type="InterPro" id="IPR010203">
    <property type="entry name" value="RraA"/>
</dbReference>
<dbReference type="InterPro" id="IPR005493">
    <property type="entry name" value="RraA/RraA-like"/>
</dbReference>
<dbReference type="InterPro" id="IPR036704">
    <property type="entry name" value="RraA/RraA-like_sf"/>
</dbReference>
<dbReference type="InterPro" id="IPR014339">
    <property type="entry name" value="RraA_gpbac"/>
</dbReference>
<dbReference type="NCBIfam" id="TIGR01935">
    <property type="entry name" value="NOT-MenG"/>
    <property type="match status" value="1"/>
</dbReference>
<dbReference type="NCBIfam" id="NF006875">
    <property type="entry name" value="PRK09372.1"/>
    <property type="match status" value="1"/>
</dbReference>
<dbReference type="NCBIfam" id="TIGR02998">
    <property type="entry name" value="RraA_entero"/>
    <property type="match status" value="1"/>
</dbReference>
<dbReference type="PANTHER" id="PTHR33254">
    <property type="entry name" value="4-HYDROXY-4-METHYL-2-OXOGLUTARATE ALDOLASE 3-RELATED"/>
    <property type="match status" value="1"/>
</dbReference>
<dbReference type="PANTHER" id="PTHR33254:SF29">
    <property type="entry name" value="REGULATOR OF RIBONUCLEASE ACTIVITY A"/>
    <property type="match status" value="1"/>
</dbReference>
<dbReference type="Pfam" id="PF03737">
    <property type="entry name" value="RraA-like"/>
    <property type="match status" value="1"/>
</dbReference>
<dbReference type="SUPFAM" id="SSF89562">
    <property type="entry name" value="RraA-like"/>
    <property type="match status" value="1"/>
</dbReference>
<evidence type="ECO:0000255" key="1">
    <source>
        <dbReference type="HAMAP-Rule" id="MF_00471"/>
    </source>
</evidence>
<organism>
    <name type="scientific">Shigella flexneri serotype 5b (strain 8401)</name>
    <dbReference type="NCBI Taxonomy" id="373384"/>
    <lineage>
        <taxon>Bacteria</taxon>
        <taxon>Pseudomonadati</taxon>
        <taxon>Pseudomonadota</taxon>
        <taxon>Gammaproteobacteria</taxon>
        <taxon>Enterobacterales</taxon>
        <taxon>Enterobacteriaceae</taxon>
        <taxon>Shigella</taxon>
    </lineage>
</organism>
<proteinExistence type="inferred from homology"/>
<feature type="chain" id="PRO_1000013874" description="Regulator of ribonuclease activity A">
    <location>
        <begin position="1"/>
        <end position="161"/>
    </location>
</feature>
<accession>Q0SY60</accession>
<name>RRAA_SHIF8</name>
<reference key="1">
    <citation type="journal article" date="2006" name="BMC Genomics">
        <title>Complete genome sequence of Shigella flexneri 5b and comparison with Shigella flexneri 2a.</title>
        <authorList>
            <person name="Nie H."/>
            <person name="Yang F."/>
            <person name="Zhang X."/>
            <person name="Yang J."/>
            <person name="Chen L."/>
            <person name="Wang J."/>
            <person name="Xiong Z."/>
            <person name="Peng J."/>
            <person name="Sun L."/>
            <person name="Dong J."/>
            <person name="Xue Y."/>
            <person name="Xu X."/>
            <person name="Chen S."/>
            <person name="Yao Z."/>
            <person name="Shen Y."/>
            <person name="Jin Q."/>
        </authorList>
    </citation>
    <scope>NUCLEOTIDE SEQUENCE [LARGE SCALE GENOMIC DNA]</scope>
    <source>
        <strain>8401</strain>
    </source>
</reference>